<proteinExistence type="inferred from homology"/>
<reference key="1">
    <citation type="journal article" date="2011" name="J. Bacteriol.">
        <title>Comparative genomics of 28 Salmonella enterica isolates: evidence for CRISPR-mediated adaptive sublineage evolution.</title>
        <authorList>
            <person name="Fricke W.F."/>
            <person name="Mammel M.K."/>
            <person name="McDermott P.F."/>
            <person name="Tartera C."/>
            <person name="White D.G."/>
            <person name="Leclerc J.E."/>
            <person name="Ravel J."/>
            <person name="Cebula T.A."/>
        </authorList>
    </citation>
    <scope>NUCLEOTIDE SEQUENCE [LARGE SCALE GENOMIC DNA]</scope>
    <source>
        <strain>SL483</strain>
    </source>
</reference>
<organism>
    <name type="scientific">Salmonella agona (strain SL483)</name>
    <dbReference type="NCBI Taxonomy" id="454166"/>
    <lineage>
        <taxon>Bacteria</taxon>
        <taxon>Pseudomonadati</taxon>
        <taxon>Pseudomonadota</taxon>
        <taxon>Gammaproteobacteria</taxon>
        <taxon>Enterobacterales</taxon>
        <taxon>Enterobacteriaceae</taxon>
        <taxon>Salmonella</taxon>
    </lineage>
</organism>
<feature type="chain" id="PRO_1000099351" description="RNA 3'-terminal phosphate cyclase">
    <location>
        <begin position="1"/>
        <end position="344"/>
    </location>
</feature>
<feature type="active site" description="Tele-AMP-histidine intermediate" evidence="1">
    <location>
        <position position="308"/>
    </location>
</feature>
<feature type="binding site" evidence="1">
    <location>
        <position position="103"/>
    </location>
    <ligand>
        <name>ATP</name>
        <dbReference type="ChEBI" id="CHEBI:30616"/>
    </ligand>
</feature>
<feature type="binding site" evidence="1">
    <location>
        <begin position="283"/>
        <end position="287"/>
    </location>
    <ligand>
        <name>ATP</name>
        <dbReference type="ChEBI" id="CHEBI:30616"/>
    </ligand>
</feature>
<protein>
    <recommendedName>
        <fullName evidence="1">RNA 3'-terminal phosphate cyclase</fullName>
        <shortName evidence="1">RNA cyclase</shortName>
        <shortName evidence="1">RNA-3'-phosphate cyclase</shortName>
        <ecNumber evidence="1">6.5.1.4</ecNumber>
    </recommendedName>
</protein>
<sequence length="344" mass="36124">MARIIALDGAQGEGGGQILRSALSLSMITGQPFEMSGIRAGRAKPGLLRQHLTAVRAATEICGAQVNGDELGSQQLRFTPGPIRGGEYRFAIGSAGSCMLVLQTVLPALWFADGSSRVEVHGGTHNQAAPSADFICRVWEPLLARMGINQRTTLIKHGFYPAGGGAAATVVEPAASLRGLTLISRGETRRITAEALLASVPHHVGEREVATLEAHFPRAEKNVVALEGGCGPGNALSLMIQSEQLTELFAAFGVKGTSAEAVANQVAHEARRYLASPAAVGEHLADQLILPLALAGEGAFTVARASAHLLTNIAVVERFLPVTFNLEEAREMVQVMVSKKDSGS</sequence>
<keyword id="KW-0067">ATP-binding</keyword>
<keyword id="KW-0963">Cytoplasm</keyword>
<keyword id="KW-0436">Ligase</keyword>
<keyword id="KW-0547">Nucleotide-binding</keyword>
<name>RTCA_SALA4</name>
<dbReference type="EC" id="6.5.1.4" evidence="1"/>
<dbReference type="EMBL" id="CP001138">
    <property type="protein sequence ID" value="ACH51093.1"/>
    <property type="molecule type" value="Genomic_DNA"/>
</dbReference>
<dbReference type="RefSeq" id="WP_000101025.1">
    <property type="nucleotide sequence ID" value="NC_011149.1"/>
</dbReference>
<dbReference type="SMR" id="B5F8N4"/>
<dbReference type="KEGG" id="sea:SeAg_B3719"/>
<dbReference type="HOGENOM" id="CLU_027882_0_0_6"/>
<dbReference type="Proteomes" id="UP000008819">
    <property type="component" value="Chromosome"/>
</dbReference>
<dbReference type="GO" id="GO:0005737">
    <property type="term" value="C:cytoplasm"/>
    <property type="evidence" value="ECO:0007669"/>
    <property type="project" value="UniProtKB-SubCell"/>
</dbReference>
<dbReference type="GO" id="GO:0005524">
    <property type="term" value="F:ATP binding"/>
    <property type="evidence" value="ECO:0007669"/>
    <property type="project" value="UniProtKB-KW"/>
</dbReference>
<dbReference type="GO" id="GO:0003963">
    <property type="term" value="F:RNA-3'-phosphate cyclase activity"/>
    <property type="evidence" value="ECO:0007669"/>
    <property type="project" value="UniProtKB-UniRule"/>
</dbReference>
<dbReference type="GO" id="GO:0006396">
    <property type="term" value="P:RNA processing"/>
    <property type="evidence" value="ECO:0007669"/>
    <property type="project" value="InterPro"/>
</dbReference>
<dbReference type="CDD" id="cd00874">
    <property type="entry name" value="RNA_Cyclase_Class_II"/>
    <property type="match status" value="1"/>
</dbReference>
<dbReference type="FunFam" id="3.65.10.20:FF:000002">
    <property type="entry name" value="GM19193"/>
    <property type="match status" value="1"/>
</dbReference>
<dbReference type="FunFam" id="3.30.360.20:FF:000003">
    <property type="entry name" value="RNA 3'-terminal phosphate cyclase"/>
    <property type="match status" value="1"/>
</dbReference>
<dbReference type="Gene3D" id="3.65.10.20">
    <property type="entry name" value="RNA 3'-terminal phosphate cyclase domain"/>
    <property type="match status" value="1"/>
</dbReference>
<dbReference type="Gene3D" id="3.30.360.20">
    <property type="entry name" value="RNA 3'-terminal phosphate cyclase, insert domain"/>
    <property type="match status" value="1"/>
</dbReference>
<dbReference type="HAMAP" id="MF_00200">
    <property type="entry name" value="RTC"/>
    <property type="match status" value="1"/>
</dbReference>
<dbReference type="InterPro" id="IPR013791">
    <property type="entry name" value="RNA3'-term_phos_cycl_insert"/>
</dbReference>
<dbReference type="InterPro" id="IPR023797">
    <property type="entry name" value="RNA3'_phos_cyclase_dom"/>
</dbReference>
<dbReference type="InterPro" id="IPR037136">
    <property type="entry name" value="RNA3'_phos_cyclase_dom_sf"/>
</dbReference>
<dbReference type="InterPro" id="IPR000228">
    <property type="entry name" value="RNA3'_term_phos_cyc"/>
</dbReference>
<dbReference type="InterPro" id="IPR017770">
    <property type="entry name" value="RNA3'_term_phos_cyc_type_1"/>
</dbReference>
<dbReference type="InterPro" id="IPR013792">
    <property type="entry name" value="RNA3'P_cycl/enolpyr_Trfase_a/b"/>
</dbReference>
<dbReference type="InterPro" id="IPR036553">
    <property type="entry name" value="RPTC_insert"/>
</dbReference>
<dbReference type="NCBIfam" id="NF003246">
    <property type="entry name" value="PRK04204.1-2"/>
    <property type="match status" value="1"/>
</dbReference>
<dbReference type="NCBIfam" id="NF003247">
    <property type="entry name" value="PRK04204.1-3"/>
    <property type="match status" value="1"/>
</dbReference>
<dbReference type="NCBIfam" id="TIGR03399">
    <property type="entry name" value="RNA_3prim_cycl"/>
    <property type="match status" value="1"/>
</dbReference>
<dbReference type="PANTHER" id="PTHR11096">
    <property type="entry name" value="RNA 3' TERMINAL PHOSPHATE CYCLASE"/>
    <property type="match status" value="1"/>
</dbReference>
<dbReference type="PANTHER" id="PTHR11096:SF0">
    <property type="entry name" value="RNA 3'-TERMINAL PHOSPHATE CYCLASE"/>
    <property type="match status" value="1"/>
</dbReference>
<dbReference type="Pfam" id="PF01137">
    <property type="entry name" value="RTC"/>
    <property type="match status" value="1"/>
</dbReference>
<dbReference type="Pfam" id="PF05189">
    <property type="entry name" value="RTC_insert"/>
    <property type="match status" value="1"/>
</dbReference>
<dbReference type="PIRSF" id="PIRSF005378">
    <property type="entry name" value="RNA3'_term_phos_cycl_euk"/>
    <property type="match status" value="1"/>
</dbReference>
<dbReference type="SUPFAM" id="SSF55205">
    <property type="entry name" value="EPT/RTPC-like"/>
    <property type="match status" value="2"/>
</dbReference>
<dbReference type="SUPFAM" id="SSF52913">
    <property type="entry name" value="RNA 3'-terminal phosphate cyclase, RPTC, insert domain"/>
    <property type="match status" value="1"/>
</dbReference>
<accession>B5F8N4</accession>
<evidence type="ECO:0000255" key="1">
    <source>
        <dbReference type="HAMAP-Rule" id="MF_00200"/>
    </source>
</evidence>
<comment type="function">
    <text evidence="1">Catalyzes the conversion of 3'-phosphate to a 2',3'-cyclic phosphodiester at the end of RNA. The mechanism of action of the enzyme occurs in 3 steps: (A) adenylation of the enzyme by ATP; (B) transfer of adenylate to an RNA-N3'P to produce RNA-N3'PP5'A; (C) and attack of the adjacent 2'-hydroxyl on the 3'-phosphorus in the diester linkage to produce the cyclic end product. The biological role of this enzyme is unknown but it is likely to function in some aspects of cellular RNA processing.</text>
</comment>
<comment type="catalytic activity">
    <reaction evidence="1">
        <text>a 3'-end 3'-phospho-ribonucleotide-RNA + ATP = a 3'-end 2',3'-cyclophospho-ribonucleotide-RNA + AMP + diphosphate</text>
        <dbReference type="Rhea" id="RHEA:23976"/>
        <dbReference type="Rhea" id="RHEA-COMP:10463"/>
        <dbReference type="Rhea" id="RHEA-COMP:10464"/>
        <dbReference type="ChEBI" id="CHEBI:30616"/>
        <dbReference type="ChEBI" id="CHEBI:33019"/>
        <dbReference type="ChEBI" id="CHEBI:83062"/>
        <dbReference type="ChEBI" id="CHEBI:83064"/>
        <dbReference type="ChEBI" id="CHEBI:456215"/>
        <dbReference type="EC" id="6.5.1.4"/>
    </reaction>
</comment>
<comment type="subcellular location">
    <subcellularLocation>
        <location evidence="1">Cytoplasm</location>
    </subcellularLocation>
</comment>
<comment type="similarity">
    <text evidence="1">Belongs to the RNA 3'-terminal cyclase family. Type 1 subfamily.</text>
</comment>
<gene>
    <name evidence="1" type="primary">rtcA</name>
    <name type="ordered locus">SeAg_B3719</name>
</gene>